<protein>
    <recommendedName>
        <fullName evidence="3">Conotoxin LiC33</fullName>
    </recommendedName>
</protein>
<sequence length="67" mass="7552">MRCVPVFIILLLLSPSAPSVDAHPKTKDDVPLASFHDDAKRTLQRLWIKALCCYGYRFCCPIFGKGK</sequence>
<keyword id="KW-0027">Amidation</keyword>
<keyword id="KW-0165">Cleavage on pair of basic residues</keyword>
<keyword id="KW-1015">Disulfide bond</keyword>
<keyword id="KW-0964">Secreted</keyword>
<keyword id="KW-0732">Signal</keyword>
<keyword id="KW-0800">Toxin</keyword>
<comment type="subcellular location">
    <subcellularLocation>
        <location evidence="1">Secreted</location>
    </subcellularLocation>
</comment>
<comment type="tissue specificity">
    <text>Expressed by the venom duct.</text>
</comment>
<comment type="domain">
    <text>The cysteine framework is V (CC-CC).</text>
</comment>
<comment type="PTM">
    <text evidence="4">Contains 2 disulfide bonds that can be either 'C1-C3, C2-C4' or 'C1-C4, C2-C3', since these disulfide connectivities have been observed for conotoxins with cysteine framework V (for examples, see AC P0DQQ7 and AC P81755).</text>
</comment>
<comment type="similarity">
    <text evidence="4">Belongs to the conotoxin T superfamily.</text>
</comment>
<proteinExistence type="evidence at transcript level"/>
<feature type="signal peptide" evidence="2">
    <location>
        <begin position="1"/>
        <end position="22"/>
    </location>
</feature>
<feature type="propeptide" id="PRO_0000274059" evidence="1">
    <location>
        <begin position="23"/>
        <end position="48"/>
    </location>
</feature>
<feature type="peptide" id="PRO_0000274060" description="Conotoxin LiC33">
    <location>
        <begin position="50"/>
        <end position="63"/>
    </location>
</feature>
<feature type="propeptide" id="PRO_0000274061">
    <location>
        <begin position="65"/>
        <end position="67"/>
    </location>
</feature>
<feature type="modified residue" description="Phenylalanine amide" evidence="1">
    <location>
        <position position="63"/>
    </location>
</feature>
<organism>
    <name type="scientific">Conus lividus</name>
    <name type="common">Livid cone</name>
    <dbReference type="NCBI Taxonomy" id="89426"/>
    <lineage>
        <taxon>Eukaryota</taxon>
        <taxon>Metazoa</taxon>
        <taxon>Spiralia</taxon>
        <taxon>Lophotrochozoa</taxon>
        <taxon>Mollusca</taxon>
        <taxon>Gastropoda</taxon>
        <taxon>Caenogastropoda</taxon>
        <taxon>Neogastropoda</taxon>
        <taxon>Conoidea</taxon>
        <taxon>Conidae</taxon>
        <taxon>Conus</taxon>
        <taxon>Lividoconus</taxon>
    </lineage>
</organism>
<name>CT33_CONLI</name>
<reference key="1">
    <citation type="journal article" date="2006" name="Chem. Biol. Drug Des.">
        <title>Identification and molecular diversity of T-superfamily conotoxins from Conus lividus and Conus litteratus.</title>
        <authorList>
            <person name="Luo S."/>
            <person name="Zhangsun D."/>
            <person name="Wu Y."/>
            <person name="Zhu X."/>
            <person name="Xie L."/>
            <person name="Hu Y."/>
            <person name="Zhang J."/>
            <person name="Zhao X."/>
        </authorList>
    </citation>
    <scope>NUCLEOTIDE SEQUENCE [MRNA]</scope>
    <source>
        <tissue>Venom duct</tissue>
    </source>
</reference>
<evidence type="ECO:0000250" key="1"/>
<evidence type="ECO:0000255" key="2"/>
<evidence type="ECO:0000303" key="3">
    <source>
    </source>
</evidence>
<evidence type="ECO:0000305" key="4"/>
<dbReference type="EMBL" id="DQ141139">
    <property type="protein sequence ID" value="AAZ85404.1"/>
    <property type="molecule type" value="mRNA"/>
</dbReference>
<dbReference type="ConoServer" id="1676">
    <property type="toxin name" value="LiC33 precursor"/>
</dbReference>
<dbReference type="GO" id="GO:0005576">
    <property type="term" value="C:extracellular region"/>
    <property type="evidence" value="ECO:0007669"/>
    <property type="project" value="UniProtKB-SubCell"/>
</dbReference>
<dbReference type="GO" id="GO:0090729">
    <property type="term" value="F:toxin activity"/>
    <property type="evidence" value="ECO:0007669"/>
    <property type="project" value="UniProtKB-KW"/>
</dbReference>
<dbReference type="InterPro" id="IPR031565">
    <property type="entry name" value="T-conotoxin"/>
</dbReference>
<dbReference type="Pfam" id="PF16981">
    <property type="entry name" value="Chi-conotoxin"/>
    <property type="match status" value="1"/>
</dbReference>
<accession>Q3YEH4</accession>